<keyword id="KW-0963">Cytoplasm</keyword>
<keyword id="KW-0255">Endonuclease</keyword>
<keyword id="KW-0378">Hydrolase</keyword>
<keyword id="KW-0460">Magnesium</keyword>
<keyword id="KW-0479">Metal-binding</keyword>
<keyword id="KW-0540">Nuclease</keyword>
<keyword id="KW-0539">Nucleus</keyword>
<keyword id="KW-1185">Reference proteome</keyword>
<name>YDA6_SCHPO</name>
<accession>Q10348</accession>
<proteinExistence type="inferred from homology"/>
<organism>
    <name type="scientific">Schizosaccharomyces pombe (strain 972 / ATCC 24843)</name>
    <name type="common">Fission yeast</name>
    <dbReference type="NCBI Taxonomy" id="284812"/>
    <lineage>
        <taxon>Eukaryota</taxon>
        <taxon>Fungi</taxon>
        <taxon>Dikarya</taxon>
        <taxon>Ascomycota</taxon>
        <taxon>Taphrinomycotina</taxon>
        <taxon>Schizosaccharomycetes</taxon>
        <taxon>Schizosaccharomycetales</taxon>
        <taxon>Schizosaccharomycetaceae</taxon>
        <taxon>Schizosaccharomyces</taxon>
    </lineage>
</organism>
<comment type="subcellular location">
    <subcellularLocation>
        <location evidence="2">Cytoplasm</location>
    </subcellularLocation>
    <subcellularLocation>
        <location evidence="2">Nucleus</location>
    </subcellularLocation>
</comment>
<comment type="similarity">
    <text evidence="3">Belongs to the endonuclease V family.</text>
</comment>
<dbReference type="EC" id="3.1.-.-"/>
<dbReference type="EMBL" id="CU329670">
    <property type="protein sequence ID" value="CAA93810.1"/>
    <property type="molecule type" value="Genomic_DNA"/>
</dbReference>
<dbReference type="PIR" id="T38064">
    <property type="entry name" value="S67449"/>
</dbReference>
<dbReference type="RefSeq" id="NP_594332.1">
    <property type="nucleotide sequence ID" value="NM_001019753.2"/>
</dbReference>
<dbReference type="SMR" id="Q10348"/>
<dbReference type="BioGRID" id="278896">
    <property type="interactions" value="2"/>
</dbReference>
<dbReference type="FunCoup" id="Q10348">
    <property type="interactions" value="53"/>
</dbReference>
<dbReference type="STRING" id="284812.Q10348"/>
<dbReference type="PaxDb" id="4896-SPAC1F12.06c.1"/>
<dbReference type="EnsemblFungi" id="SPAC1F12.06c.1">
    <property type="protein sequence ID" value="SPAC1F12.06c.1:pep"/>
    <property type="gene ID" value="SPAC1F12.06c"/>
</dbReference>
<dbReference type="KEGG" id="spo:2542434"/>
<dbReference type="PomBase" id="SPAC1F12.06c"/>
<dbReference type="VEuPathDB" id="FungiDB:SPAC1F12.06c"/>
<dbReference type="eggNOG" id="KOG4417">
    <property type="taxonomic scope" value="Eukaryota"/>
</dbReference>
<dbReference type="HOGENOM" id="CLU_047631_0_2_1"/>
<dbReference type="InParanoid" id="Q10348"/>
<dbReference type="OMA" id="NACAHTL"/>
<dbReference type="PhylomeDB" id="Q10348"/>
<dbReference type="PRO" id="PR:Q10348"/>
<dbReference type="Proteomes" id="UP000002485">
    <property type="component" value="Chromosome I"/>
</dbReference>
<dbReference type="GO" id="GO:0005737">
    <property type="term" value="C:cytoplasm"/>
    <property type="evidence" value="ECO:0000318"/>
    <property type="project" value="GO_Central"/>
</dbReference>
<dbReference type="GO" id="GO:0005829">
    <property type="term" value="C:cytosol"/>
    <property type="evidence" value="ECO:0007005"/>
    <property type="project" value="PomBase"/>
</dbReference>
<dbReference type="GO" id="GO:0005730">
    <property type="term" value="C:nucleolus"/>
    <property type="evidence" value="ECO:0000318"/>
    <property type="project" value="GO_Central"/>
</dbReference>
<dbReference type="GO" id="GO:0005634">
    <property type="term" value="C:nucleus"/>
    <property type="evidence" value="ECO:0007005"/>
    <property type="project" value="PomBase"/>
</dbReference>
<dbReference type="GO" id="GO:0046872">
    <property type="term" value="F:metal ion binding"/>
    <property type="evidence" value="ECO:0007669"/>
    <property type="project" value="UniProtKB-KW"/>
</dbReference>
<dbReference type="GO" id="GO:0016891">
    <property type="term" value="F:RNA endonuclease activity, producing 5'-phosphomonoesters"/>
    <property type="evidence" value="ECO:0000318"/>
    <property type="project" value="GO_Central"/>
</dbReference>
<dbReference type="GO" id="GO:0003727">
    <property type="term" value="F:single-stranded RNA binding"/>
    <property type="evidence" value="ECO:0000318"/>
    <property type="project" value="GO_Central"/>
</dbReference>
<dbReference type="GO" id="GO:0006281">
    <property type="term" value="P:DNA repair"/>
    <property type="evidence" value="ECO:0007669"/>
    <property type="project" value="InterPro"/>
</dbReference>
<dbReference type="CDD" id="cd06559">
    <property type="entry name" value="Endonuclease_V"/>
    <property type="match status" value="1"/>
</dbReference>
<dbReference type="FunFam" id="3.30.2170.10:FF:000004">
    <property type="entry name" value="Endonuclease V, putative"/>
    <property type="match status" value="1"/>
</dbReference>
<dbReference type="Gene3D" id="3.30.2170.10">
    <property type="entry name" value="archaeoglobus fulgidus dsm 4304 superfamily"/>
    <property type="match status" value="1"/>
</dbReference>
<dbReference type="InterPro" id="IPR007581">
    <property type="entry name" value="Endonuclease-V"/>
</dbReference>
<dbReference type="PANTHER" id="PTHR28511">
    <property type="entry name" value="ENDONUCLEASE V"/>
    <property type="match status" value="1"/>
</dbReference>
<dbReference type="PANTHER" id="PTHR28511:SF1">
    <property type="entry name" value="ENDONUCLEASE V"/>
    <property type="match status" value="1"/>
</dbReference>
<dbReference type="Pfam" id="PF04493">
    <property type="entry name" value="Endonuclease_5"/>
    <property type="match status" value="1"/>
</dbReference>
<protein>
    <recommendedName>
        <fullName>Putative endonuclease C1F12.06c</fullName>
        <ecNumber>3.1.-.-</ecNumber>
    </recommendedName>
</protein>
<reference key="1">
    <citation type="journal article" date="2002" name="Nature">
        <title>The genome sequence of Schizosaccharomyces pombe.</title>
        <authorList>
            <person name="Wood V."/>
            <person name="Gwilliam R."/>
            <person name="Rajandream M.A."/>
            <person name="Lyne M.H."/>
            <person name="Lyne R."/>
            <person name="Stewart A."/>
            <person name="Sgouros J.G."/>
            <person name="Peat N."/>
            <person name="Hayles J."/>
            <person name="Baker S.G."/>
            <person name="Basham D."/>
            <person name="Bowman S."/>
            <person name="Brooks K."/>
            <person name="Brown D."/>
            <person name="Brown S."/>
            <person name="Chillingworth T."/>
            <person name="Churcher C.M."/>
            <person name="Collins M."/>
            <person name="Connor R."/>
            <person name="Cronin A."/>
            <person name="Davis P."/>
            <person name="Feltwell T."/>
            <person name="Fraser A."/>
            <person name="Gentles S."/>
            <person name="Goble A."/>
            <person name="Hamlin N."/>
            <person name="Harris D.E."/>
            <person name="Hidalgo J."/>
            <person name="Hodgson G."/>
            <person name="Holroyd S."/>
            <person name="Hornsby T."/>
            <person name="Howarth S."/>
            <person name="Huckle E.J."/>
            <person name="Hunt S."/>
            <person name="Jagels K."/>
            <person name="James K.D."/>
            <person name="Jones L."/>
            <person name="Jones M."/>
            <person name="Leather S."/>
            <person name="McDonald S."/>
            <person name="McLean J."/>
            <person name="Mooney P."/>
            <person name="Moule S."/>
            <person name="Mungall K.L."/>
            <person name="Murphy L.D."/>
            <person name="Niblett D."/>
            <person name="Odell C."/>
            <person name="Oliver K."/>
            <person name="O'Neil S."/>
            <person name="Pearson D."/>
            <person name="Quail M.A."/>
            <person name="Rabbinowitsch E."/>
            <person name="Rutherford K.M."/>
            <person name="Rutter S."/>
            <person name="Saunders D."/>
            <person name="Seeger K."/>
            <person name="Sharp S."/>
            <person name="Skelton J."/>
            <person name="Simmonds M.N."/>
            <person name="Squares R."/>
            <person name="Squares S."/>
            <person name="Stevens K."/>
            <person name="Taylor K."/>
            <person name="Taylor R.G."/>
            <person name="Tivey A."/>
            <person name="Walsh S.V."/>
            <person name="Warren T."/>
            <person name="Whitehead S."/>
            <person name="Woodward J.R."/>
            <person name="Volckaert G."/>
            <person name="Aert R."/>
            <person name="Robben J."/>
            <person name="Grymonprez B."/>
            <person name="Weltjens I."/>
            <person name="Vanstreels E."/>
            <person name="Rieger M."/>
            <person name="Schaefer M."/>
            <person name="Mueller-Auer S."/>
            <person name="Gabel C."/>
            <person name="Fuchs M."/>
            <person name="Duesterhoeft A."/>
            <person name="Fritzc C."/>
            <person name="Holzer E."/>
            <person name="Moestl D."/>
            <person name="Hilbert H."/>
            <person name="Borzym K."/>
            <person name="Langer I."/>
            <person name="Beck A."/>
            <person name="Lehrach H."/>
            <person name="Reinhardt R."/>
            <person name="Pohl T.M."/>
            <person name="Eger P."/>
            <person name="Zimmermann W."/>
            <person name="Wedler H."/>
            <person name="Wambutt R."/>
            <person name="Purnelle B."/>
            <person name="Goffeau A."/>
            <person name="Cadieu E."/>
            <person name="Dreano S."/>
            <person name="Gloux S."/>
            <person name="Lelaure V."/>
            <person name="Mottier S."/>
            <person name="Galibert F."/>
            <person name="Aves S.J."/>
            <person name="Xiang Z."/>
            <person name="Hunt C."/>
            <person name="Moore K."/>
            <person name="Hurst S.M."/>
            <person name="Lucas M."/>
            <person name="Rochet M."/>
            <person name="Gaillardin C."/>
            <person name="Tallada V.A."/>
            <person name="Garzon A."/>
            <person name="Thode G."/>
            <person name="Daga R.R."/>
            <person name="Cruzado L."/>
            <person name="Jimenez J."/>
            <person name="Sanchez M."/>
            <person name="del Rey F."/>
            <person name="Benito J."/>
            <person name="Dominguez A."/>
            <person name="Revuelta J.L."/>
            <person name="Moreno S."/>
            <person name="Armstrong J."/>
            <person name="Forsburg S.L."/>
            <person name="Cerutti L."/>
            <person name="Lowe T."/>
            <person name="McCombie W.R."/>
            <person name="Paulsen I."/>
            <person name="Potashkin J."/>
            <person name="Shpakovski G.V."/>
            <person name="Ussery D."/>
            <person name="Barrell B.G."/>
            <person name="Nurse P."/>
        </authorList>
    </citation>
    <scope>NUCLEOTIDE SEQUENCE [LARGE SCALE GENOMIC DNA]</scope>
    <source>
        <strain>972 / ATCC 24843</strain>
    </source>
</reference>
<reference key="2">
    <citation type="journal article" date="2006" name="Nat. Biotechnol.">
        <title>ORFeome cloning and global analysis of protein localization in the fission yeast Schizosaccharomyces pombe.</title>
        <authorList>
            <person name="Matsuyama A."/>
            <person name="Arai R."/>
            <person name="Yashiroda Y."/>
            <person name="Shirai A."/>
            <person name="Kamata A."/>
            <person name="Sekido S."/>
            <person name="Kobayashi Y."/>
            <person name="Hashimoto A."/>
            <person name="Hamamoto M."/>
            <person name="Hiraoka Y."/>
            <person name="Horinouchi S."/>
            <person name="Yoshida M."/>
        </authorList>
    </citation>
    <scope>SUBCELLULAR LOCATION [LARGE SCALE ANALYSIS]</scope>
</reference>
<feature type="chain" id="PRO_0000159701" description="Putative endonuclease C1F12.06c">
    <location>
        <begin position="1"/>
        <end position="252"/>
    </location>
</feature>
<feature type="binding site" evidence="1">
    <location>
        <position position="43"/>
    </location>
    <ligand>
        <name>Mg(2+)</name>
        <dbReference type="ChEBI" id="CHEBI:18420"/>
    </ligand>
</feature>
<feature type="binding site" evidence="1">
    <location>
        <position position="114"/>
    </location>
    <ligand>
        <name>Mg(2+)</name>
        <dbReference type="ChEBI" id="CHEBI:18420"/>
    </ligand>
</feature>
<feature type="site" description="Interaction with target DNA" evidence="1">
    <location>
        <position position="82"/>
    </location>
</feature>
<sequence>MNNDNLHDKLTIWRQQQIELKGMLQLIPKFQSLNEIRYVVGLDISFDKSSPKAVSALVIYDLEQRMIIYKDYLCIEKLEEDYVPGFLSFREIKWYLPLLNHIPHQFRIDIILVDGNGVLHPVGFGLACHLGVLLNLPVVGVAKNYLHCVGLTESLDAHRETLKKHVLKKTTDHPILIHSIDQSSEILGAAVWTSSNSKRPVYVSIGNQMNLEQSIQLVQKCSSSHSRVPEPIRQADIYAKFVLSQSKRNKKN</sequence>
<gene>
    <name type="ORF">SPAC1F12.06c</name>
</gene>
<evidence type="ECO:0000250" key="1"/>
<evidence type="ECO:0000269" key="2">
    <source>
    </source>
</evidence>
<evidence type="ECO:0000305" key="3"/>